<proteinExistence type="evidence at protein level"/>
<reference key="1">
    <citation type="journal article" date="2001" name="Nature">
        <title>Complete genome sequence of Salmonella enterica serovar Typhimurium LT2.</title>
        <authorList>
            <person name="McClelland M."/>
            <person name="Sanderson K.E."/>
            <person name="Spieth J."/>
            <person name="Clifton S.W."/>
            <person name="Latreille P."/>
            <person name="Courtney L."/>
            <person name="Porwollik S."/>
            <person name="Ali J."/>
            <person name="Dante M."/>
            <person name="Du F."/>
            <person name="Hou S."/>
            <person name="Layman D."/>
            <person name="Leonard S."/>
            <person name="Nguyen C."/>
            <person name="Scott K."/>
            <person name="Holmes A."/>
            <person name="Grewal N."/>
            <person name="Mulvaney E."/>
            <person name="Ryan E."/>
            <person name="Sun H."/>
            <person name="Florea L."/>
            <person name="Miller W."/>
            <person name="Stoneking T."/>
            <person name="Nhan M."/>
            <person name="Waterston R."/>
            <person name="Wilson R.K."/>
        </authorList>
    </citation>
    <scope>NUCLEOTIDE SEQUENCE [LARGE SCALE GENOMIC DNA]</scope>
    <source>
        <strain>LT2 / SGSC1412 / ATCC 700720</strain>
    </source>
</reference>
<evidence type="ECO:0000255" key="1">
    <source>
        <dbReference type="HAMAP-Rule" id="MF_01186"/>
    </source>
</evidence>
<evidence type="ECO:0000256" key="2">
    <source>
        <dbReference type="SAM" id="MobiDB-lite"/>
    </source>
</evidence>
<evidence type="ECO:0007829" key="3">
    <source>
        <dbReference type="PDB" id="4N4R"/>
    </source>
</evidence>
<dbReference type="EMBL" id="AE006468">
    <property type="protein sequence ID" value="AAL19598.1"/>
    <property type="molecule type" value="Genomic_DNA"/>
</dbReference>
<dbReference type="RefSeq" id="NP_459639.1">
    <property type="nucleotide sequence ID" value="NC_003197.2"/>
</dbReference>
<dbReference type="RefSeq" id="WP_001269947.1">
    <property type="nucleotide sequence ID" value="NC_003197.2"/>
</dbReference>
<dbReference type="PDB" id="4N4R">
    <property type="method" value="X-ray"/>
    <property type="resolution" value="2.80 A"/>
    <property type="chains" value="B/D=1-196"/>
</dbReference>
<dbReference type="PDBsum" id="4N4R"/>
<dbReference type="SMR" id="Q8ZQZ7"/>
<dbReference type="DIP" id="DIP-61033N"/>
<dbReference type="IntAct" id="Q8ZQZ7">
    <property type="interactions" value="1"/>
</dbReference>
<dbReference type="STRING" id="99287.STM0647"/>
<dbReference type="PaxDb" id="99287-STM0647"/>
<dbReference type="DNASU" id="1252167"/>
<dbReference type="GeneID" id="1252167"/>
<dbReference type="KEGG" id="stm:STM0647"/>
<dbReference type="PATRIC" id="fig|99287.12.peg.683"/>
<dbReference type="HOGENOM" id="CLU_103309_1_1_6"/>
<dbReference type="OMA" id="ACGFHFQ"/>
<dbReference type="PhylomeDB" id="Q8ZQZ7"/>
<dbReference type="BioCyc" id="MetaCyc:STM0647-MONOMER"/>
<dbReference type="BioCyc" id="SENT99287:STM0647-MONOMER"/>
<dbReference type="EvolutionaryTrace" id="Q8ZQZ7"/>
<dbReference type="Proteomes" id="UP000001014">
    <property type="component" value="Chromosome"/>
</dbReference>
<dbReference type="GO" id="GO:0009279">
    <property type="term" value="C:cell outer membrane"/>
    <property type="evidence" value="ECO:0000318"/>
    <property type="project" value="GO_Central"/>
</dbReference>
<dbReference type="GO" id="GO:1990351">
    <property type="term" value="C:transporter complex"/>
    <property type="evidence" value="ECO:0000318"/>
    <property type="project" value="GO_Central"/>
</dbReference>
<dbReference type="GO" id="GO:0001530">
    <property type="term" value="F:lipopolysaccharide binding"/>
    <property type="evidence" value="ECO:0000318"/>
    <property type="project" value="GO_Central"/>
</dbReference>
<dbReference type="GO" id="GO:0043165">
    <property type="term" value="P:Gram-negative-bacterium-type cell outer membrane assembly"/>
    <property type="evidence" value="ECO:0000318"/>
    <property type="project" value="GO_Central"/>
</dbReference>
<dbReference type="GO" id="GO:0015920">
    <property type="term" value="P:lipopolysaccharide transport"/>
    <property type="evidence" value="ECO:0000318"/>
    <property type="project" value="GO_Central"/>
</dbReference>
<dbReference type="FunFam" id="3.30.160.150:FF:000001">
    <property type="entry name" value="LPS-assembly lipoprotein LptE"/>
    <property type="match status" value="1"/>
</dbReference>
<dbReference type="Gene3D" id="3.30.160.150">
    <property type="entry name" value="Lipoprotein like domain"/>
    <property type="match status" value="1"/>
</dbReference>
<dbReference type="HAMAP" id="MF_01186">
    <property type="entry name" value="LPS_assembly_LptE"/>
    <property type="match status" value="1"/>
</dbReference>
<dbReference type="InterPro" id="IPR007485">
    <property type="entry name" value="LPS_assembly_LptE"/>
</dbReference>
<dbReference type="NCBIfam" id="NF008062">
    <property type="entry name" value="PRK10796.1"/>
    <property type="match status" value="1"/>
</dbReference>
<dbReference type="PANTHER" id="PTHR38098">
    <property type="entry name" value="LPS-ASSEMBLY LIPOPROTEIN LPTE"/>
    <property type="match status" value="1"/>
</dbReference>
<dbReference type="PANTHER" id="PTHR38098:SF1">
    <property type="entry name" value="LPS-ASSEMBLY LIPOPROTEIN LPTE"/>
    <property type="match status" value="1"/>
</dbReference>
<dbReference type="Pfam" id="PF04390">
    <property type="entry name" value="LptE"/>
    <property type="match status" value="1"/>
</dbReference>
<dbReference type="PROSITE" id="PS51257">
    <property type="entry name" value="PROKAR_LIPOPROTEIN"/>
    <property type="match status" value="1"/>
</dbReference>
<comment type="function">
    <text evidence="1">Together with LptD, is involved in the assembly of lipopolysaccharide (LPS) at the surface of the outer membrane. Required for the proper assembly of LptD. Binds LPS and may serve as the LPS recognition site at the outer membrane.</text>
</comment>
<comment type="subunit">
    <text evidence="1">Component of the lipopolysaccharide transport and assembly complex. Interacts with LptD.</text>
</comment>
<comment type="interaction">
    <interactant intactId="EBI-16111540">
        <id>Q8ZQZ7</id>
    </interactant>
    <interactant intactId="EBI-16111554">
        <id>Q8ZRW0</id>
        <label>lptD</label>
    </interactant>
    <organismsDiffer>false</organismsDiffer>
    <experiments>3</experiments>
</comment>
<comment type="subcellular location">
    <subcellularLocation>
        <location evidence="1">Cell outer membrane</location>
        <topology evidence="1">Lipid-anchor</topology>
    </subcellularLocation>
</comment>
<comment type="similarity">
    <text evidence="1">Belongs to the LptE lipoprotein family.</text>
</comment>
<organism>
    <name type="scientific">Salmonella typhimurium (strain LT2 / SGSC1412 / ATCC 700720)</name>
    <dbReference type="NCBI Taxonomy" id="99287"/>
    <lineage>
        <taxon>Bacteria</taxon>
        <taxon>Pseudomonadati</taxon>
        <taxon>Pseudomonadota</taxon>
        <taxon>Gammaproteobacteria</taxon>
        <taxon>Enterobacterales</taxon>
        <taxon>Enterobacteriaceae</taxon>
        <taxon>Salmonella</taxon>
    </lineage>
</organism>
<protein>
    <recommendedName>
        <fullName evidence="1">LPS-assembly lipoprotein LptE</fullName>
    </recommendedName>
</protein>
<accession>Q8ZQZ7</accession>
<feature type="signal peptide" evidence="1">
    <location>
        <begin position="1"/>
        <end position="18"/>
    </location>
</feature>
<feature type="chain" id="PRO_0000281184" description="LPS-assembly lipoprotein LptE">
    <location>
        <begin position="19"/>
        <end position="196"/>
    </location>
</feature>
<feature type="region of interest" description="Disordered" evidence="2">
    <location>
        <begin position="171"/>
        <end position="196"/>
    </location>
</feature>
<feature type="lipid moiety-binding region" description="N-palmitoyl cysteine" evidence="1">
    <location>
        <position position="19"/>
    </location>
</feature>
<feature type="lipid moiety-binding region" description="S-diacylglycerol cysteine" evidence="1">
    <location>
        <position position="19"/>
    </location>
</feature>
<feature type="helix" evidence="3">
    <location>
        <begin position="31"/>
        <end position="33"/>
    </location>
</feature>
<feature type="strand" evidence="3">
    <location>
        <begin position="34"/>
        <end position="39"/>
    </location>
</feature>
<feature type="helix" evidence="3">
    <location>
        <begin position="46"/>
        <end position="57"/>
    </location>
</feature>
<feature type="strand" evidence="3">
    <location>
        <begin position="61"/>
        <end position="63"/>
    </location>
</feature>
<feature type="strand" evidence="3">
    <location>
        <begin position="74"/>
        <end position="89"/>
    </location>
</feature>
<feature type="strand" evidence="3">
    <location>
        <begin position="95"/>
        <end position="109"/>
    </location>
</feature>
<feature type="strand" evidence="3">
    <location>
        <begin position="115"/>
        <end position="127"/>
    </location>
</feature>
<feature type="helix" evidence="3">
    <location>
        <begin position="130"/>
        <end position="132"/>
    </location>
</feature>
<feature type="helix" evidence="3">
    <location>
        <begin position="133"/>
        <end position="157"/>
    </location>
</feature>
<feature type="helix" evidence="3">
    <location>
        <begin position="159"/>
        <end position="167"/>
    </location>
</feature>
<keyword id="KW-0002">3D-structure</keyword>
<keyword id="KW-0998">Cell outer membrane</keyword>
<keyword id="KW-0449">Lipoprotein</keyword>
<keyword id="KW-0472">Membrane</keyword>
<keyword id="KW-0564">Palmitate</keyword>
<keyword id="KW-1185">Reference proteome</keyword>
<keyword id="KW-0732">Signal</keyword>
<sequence>MRYLVTLLLSLAVLVTAGCGWHLRSTTQVPASMKTMILDSGDPNGPLSRAVRNQLRLNNVNLLDKDTTRKDVPSLRLGTVTILQDTASVFQDGQTAEYQMVMTVNASVLIPGHDIYPISTKVYRSFFDNPQMALAKDNEQAMIVQEMYDKAAEQLIRKLTSVRAADIQATKEEATADNETAAPASTPARVSTTLSN</sequence>
<name>LPTE_SALTY</name>
<gene>
    <name evidence="1" type="primary">lptE</name>
    <name type="synonym">rlpB</name>
    <name type="ordered locus">STM0647</name>
</gene>